<keyword id="KW-0046">Antibiotic resistance</keyword>
<keyword id="KW-0997">Cell inner membrane</keyword>
<keyword id="KW-1003">Cell membrane</keyword>
<keyword id="KW-0133">Cell shape</keyword>
<keyword id="KW-0961">Cell wall biogenesis/degradation</keyword>
<keyword id="KW-0378">Hydrolase</keyword>
<keyword id="KW-0472">Membrane</keyword>
<keyword id="KW-0573">Peptidoglycan synthesis</keyword>
<keyword id="KW-1185">Reference proteome</keyword>
<keyword id="KW-0812">Transmembrane</keyword>
<keyword id="KW-1133">Transmembrane helix</keyword>
<name>UPPP_PROMT</name>
<proteinExistence type="inferred from homology"/>
<gene>
    <name evidence="1" type="primary">uppP</name>
    <name type="ordered locus">PMN2A_0252</name>
</gene>
<evidence type="ECO:0000255" key="1">
    <source>
        <dbReference type="HAMAP-Rule" id="MF_01006"/>
    </source>
</evidence>
<accession>Q46L84</accession>
<reference key="1">
    <citation type="journal article" date="2007" name="PLoS Genet.">
        <title>Patterns and implications of gene gain and loss in the evolution of Prochlorococcus.</title>
        <authorList>
            <person name="Kettler G.C."/>
            <person name="Martiny A.C."/>
            <person name="Huang K."/>
            <person name="Zucker J."/>
            <person name="Coleman M.L."/>
            <person name="Rodrigue S."/>
            <person name="Chen F."/>
            <person name="Lapidus A."/>
            <person name="Ferriera S."/>
            <person name="Johnson J."/>
            <person name="Steglich C."/>
            <person name="Church G.M."/>
            <person name="Richardson P."/>
            <person name="Chisholm S.W."/>
        </authorList>
    </citation>
    <scope>NUCLEOTIDE SEQUENCE [LARGE SCALE GENOMIC DNA]</scope>
    <source>
        <strain>NATL2A</strain>
    </source>
</reference>
<feature type="chain" id="PRO_0000227626" description="Undecaprenyl-diphosphatase">
    <location>
        <begin position="1"/>
        <end position="279"/>
    </location>
</feature>
<feature type="transmembrane region" description="Helical" evidence="1">
    <location>
        <begin position="10"/>
        <end position="30"/>
    </location>
</feature>
<feature type="transmembrane region" description="Helical" evidence="1">
    <location>
        <begin position="48"/>
        <end position="68"/>
    </location>
</feature>
<feature type="transmembrane region" description="Helical" evidence="1">
    <location>
        <begin position="96"/>
        <end position="116"/>
    </location>
</feature>
<feature type="transmembrane region" description="Helical" evidence="1">
    <location>
        <begin position="128"/>
        <end position="148"/>
    </location>
</feature>
<feature type="transmembrane region" description="Helical" evidence="1">
    <location>
        <begin position="203"/>
        <end position="223"/>
    </location>
</feature>
<feature type="transmembrane region" description="Helical" evidence="1">
    <location>
        <begin position="229"/>
        <end position="249"/>
    </location>
</feature>
<feature type="transmembrane region" description="Helical" evidence="1">
    <location>
        <begin position="259"/>
        <end position="279"/>
    </location>
</feature>
<organism>
    <name type="scientific">Prochlorococcus marinus (strain NATL2A)</name>
    <dbReference type="NCBI Taxonomy" id="59920"/>
    <lineage>
        <taxon>Bacteria</taxon>
        <taxon>Bacillati</taxon>
        <taxon>Cyanobacteriota</taxon>
        <taxon>Cyanophyceae</taxon>
        <taxon>Synechococcales</taxon>
        <taxon>Prochlorococcaceae</taxon>
        <taxon>Prochlorococcus</taxon>
    </lineage>
</organism>
<sequence length="279" mass="31062">MPEDISRYLFICFKSIFLGIIQGFTEFLPISSTAHLKVVPYLFGWNDLGVSFSASIQLGSAVAIIYYFRNHISLIINSFFSSFNPSKGFKDENSRLFLYIFVASIPILVFGLLIKLYWPNYSDSNLRGLFSIAITSIVMALLLALSEIYGKRNKLFVDINLNDVIKLGLAQSLALFPGVSRSGITLTSALFSGIERKTAARLSFLVGIPAVSISGLVELFSLFRVLSVIDIIPIIIGIISSFFSSIFAIDLFLKFLSKNNTLVFVYYRLAFGIFILTTL</sequence>
<dbReference type="EC" id="3.6.1.27" evidence="1"/>
<dbReference type="EMBL" id="CP000095">
    <property type="protein sequence ID" value="AAZ57744.1"/>
    <property type="molecule type" value="Genomic_DNA"/>
</dbReference>
<dbReference type="RefSeq" id="WP_011293786.1">
    <property type="nucleotide sequence ID" value="NC_007335.2"/>
</dbReference>
<dbReference type="SMR" id="Q46L84"/>
<dbReference type="STRING" id="59920.PMN2A_0252"/>
<dbReference type="KEGG" id="pmn:PMN2A_0252"/>
<dbReference type="HOGENOM" id="CLU_060296_1_0_3"/>
<dbReference type="OrthoDB" id="9808289at2"/>
<dbReference type="PhylomeDB" id="Q46L84"/>
<dbReference type="Proteomes" id="UP000002535">
    <property type="component" value="Chromosome"/>
</dbReference>
<dbReference type="GO" id="GO:0005886">
    <property type="term" value="C:plasma membrane"/>
    <property type="evidence" value="ECO:0007669"/>
    <property type="project" value="UniProtKB-SubCell"/>
</dbReference>
<dbReference type="GO" id="GO:0050380">
    <property type="term" value="F:undecaprenyl-diphosphatase activity"/>
    <property type="evidence" value="ECO:0007669"/>
    <property type="project" value="UniProtKB-UniRule"/>
</dbReference>
<dbReference type="GO" id="GO:0071555">
    <property type="term" value="P:cell wall organization"/>
    <property type="evidence" value="ECO:0007669"/>
    <property type="project" value="UniProtKB-KW"/>
</dbReference>
<dbReference type="GO" id="GO:0009252">
    <property type="term" value="P:peptidoglycan biosynthetic process"/>
    <property type="evidence" value="ECO:0007669"/>
    <property type="project" value="UniProtKB-KW"/>
</dbReference>
<dbReference type="GO" id="GO:0008360">
    <property type="term" value="P:regulation of cell shape"/>
    <property type="evidence" value="ECO:0007669"/>
    <property type="project" value="UniProtKB-KW"/>
</dbReference>
<dbReference type="GO" id="GO:0046677">
    <property type="term" value="P:response to antibiotic"/>
    <property type="evidence" value="ECO:0007669"/>
    <property type="project" value="UniProtKB-UniRule"/>
</dbReference>
<dbReference type="HAMAP" id="MF_01006">
    <property type="entry name" value="Undec_diphosphatase"/>
    <property type="match status" value="1"/>
</dbReference>
<dbReference type="InterPro" id="IPR003824">
    <property type="entry name" value="UppP"/>
</dbReference>
<dbReference type="NCBIfam" id="NF001394">
    <property type="entry name" value="PRK00281.2-5"/>
    <property type="match status" value="1"/>
</dbReference>
<dbReference type="NCBIfam" id="TIGR00753">
    <property type="entry name" value="undec_PP_bacA"/>
    <property type="match status" value="1"/>
</dbReference>
<dbReference type="PANTHER" id="PTHR30622">
    <property type="entry name" value="UNDECAPRENYL-DIPHOSPHATASE"/>
    <property type="match status" value="1"/>
</dbReference>
<dbReference type="PANTHER" id="PTHR30622:SF4">
    <property type="entry name" value="UNDECAPRENYL-DIPHOSPHATASE"/>
    <property type="match status" value="1"/>
</dbReference>
<dbReference type="Pfam" id="PF02673">
    <property type="entry name" value="BacA"/>
    <property type="match status" value="1"/>
</dbReference>
<protein>
    <recommendedName>
        <fullName evidence="1">Undecaprenyl-diphosphatase</fullName>
        <ecNumber evidence="1">3.6.1.27</ecNumber>
    </recommendedName>
    <alternativeName>
        <fullName evidence="1">Bacitracin resistance protein</fullName>
    </alternativeName>
    <alternativeName>
        <fullName evidence="1">Undecaprenyl pyrophosphate phosphatase</fullName>
    </alternativeName>
</protein>
<comment type="function">
    <text evidence="1">Catalyzes the dephosphorylation of undecaprenyl diphosphate (UPP). Confers resistance to bacitracin.</text>
</comment>
<comment type="catalytic activity">
    <reaction evidence="1">
        <text>di-trans,octa-cis-undecaprenyl diphosphate + H2O = di-trans,octa-cis-undecaprenyl phosphate + phosphate + H(+)</text>
        <dbReference type="Rhea" id="RHEA:28094"/>
        <dbReference type="ChEBI" id="CHEBI:15377"/>
        <dbReference type="ChEBI" id="CHEBI:15378"/>
        <dbReference type="ChEBI" id="CHEBI:43474"/>
        <dbReference type="ChEBI" id="CHEBI:58405"/>
        <dbReference type="ChEBI" id="CHEBI:60392"/>
        <dbReference type="EC" id="3.6.1.27"/>
    </reaction>
</comment>
<comment type="subcellular location">
    <subcellularLocation>
        <location evidence="1">Cell inner membrane</location>
        <topology evidence="1">Multi-pass membrane protein</topology>
    </subcellularLocation>
</comment>
<comment type="miscellaneous">
    <text>Bacitracin is thought to be involved in the inhibition of peptidoglycan synthesis by sequestering undecaprenyl diphosphate, thereby reducing the pool of lipid carrier available.</text>
</comment>
<comment type="similarity">
    <text evidence="1">Belongs to the UppP family.</text>
</comment>